<evidence type="ECO:0000255" key="1">
    <source>
        <dbReference type="HAMAP-Rule" id="MF_00145"/>
    </source>
</evidence>
<sequence length="399" mass="41487">MNIRTLDDLLAEEVTGRRVLVRADLNVPLDKQTGQITDDGRIRAVLPTLGALVQAGAKVVVCSHLGRPKGSPDPAFSLRPVAGRLGELLGAPVHFAEDTVGDSARSTVAGLADGQVALLENLRFNPGETSKDEAQRGAFADQLAALADAYVDDAFGAVHRRHASVYDVPARLPHVAGRLVLREVEVLGTLTGEPDRPYVVVLGGSKVSDKLAVIEALLPKVDRLLVGGGMCFTFLKAQGHEVGSSLLEEEMVETCRSLLERAGGKIMLPVDVVAADAFAPDAPHDTVRADGIPSKRVGLDIGPETVAGFAAALRGARTIFWNGPMGVFEMAAFAHGTCGVAEAIANADAFTVVGGGDSAAAVRALGLDEQAFSHISTGGGASLEYLEGKTLPGIAALEN</sequence>
<reference key="1">
    <citation type="submission" date="2007-10" db="EMBL/GenBank/DDBJ databases">
        <title>Complete sequence of Salinispora arenicola CNS-205.</title>
        <authorList>
            <consortium name="US DOE Joint Genome Institute"/>
            <person name="Copeland A."/>
            <person name="Lucas S."/>
            <person name="Lapidus A."/>
            <person name="Barry K."/>
            <person name="Glavina del Rio T."/>
            <person name="Dalin E."/>
            <person name="Tice H."/>
            <person name="Pitluck S."/>
            <person name="Foster B."/>
            <person name="Schmutz J."/>
            <person name="Larimer F."/>
            <person name="Land M."/>
            <person name="Hauser L."/>
            <person name="Kyrpides N."/>
            <person name="Ivanova N."/>
            <person name="Jensen P.R."/>
            <person name="Moore B.S."/>
            <person name="Penn K."/>
            <person name="Jenkins C."/>
            <person name="Udwary D."/>
            <person name="Xiang L."/>
            <person name="Gontang E."/>
            <person name="Richardson P."/>
        </authorList>
    </citation>
    <scope>NUCLEOTIDE SEQUENCE [LARGE SCALE GENOMIC DNA]</scope>
    <source>
        <strain>CNS-205</strain>
    </source>
</reference>
<dbReference type="EC" id="2.7.2.3" evidence="1"/>
<dbReference type="EMBL" id="CP000850">
    <property type="protein sequence ID" value="ABV99127.1"/>
    <property type="molecule type" value="Genomic_DNA"/>
</dbReference>
<dbReference type="SMR" id="A8LW18"/>
<dbReference type="STRING" id="391037.Sare_3324"/>
<dbReference type="KEGG" id="saq:Sare_3324"/>
<dbReference type="PATRIC" id="fig|391037.6.peg.3353"/>
<dbReference type="eggNOG" id="COG0126">
    <property type="taxonomic scope" value="Bacteria"/>
</dbReference>
<dbReference type="HOGENOM" id="CLU_025427_0_2_11"/>
<dbReference type="OrthoDB" id="9808460at2"/>
<dbReference type="UniPathway" id="UPA00109">
    <property type="reaction ID" value="UER00185"/>
</dbReference>
<dbReference type="GO" id="GO:0005829">
    <property type="term" value="C:cytosol"/>
    <property type="evidence" value="ECO:0007669"/>
    <property type="project" value="TreeGrafter"/>
</dbReference>
<dbReference type="GO" id="GO:0043531">
    <property type="term" value="F:ADP binding"/>
    <property type="evidence" value="ECO:0007669"/>
    <property type="project" value="TreeGrafter"/>
</dbReference>
<dbReference type="GO" id="GO:0005524">
    <property type="term" value="F:ATP binding"/>
    <property type="evidence" value="ECO:0007669"/>
    <property type="project" value="UniProtKB-KW"/>
</dbReference>
<dbReference type="GO" id="GO:0004618">
    <property type="term" value="F:phosphoglycerate kinase activity"/>
    <property type="evidence" value="ECO:0007669"/>
    <property type="project" value="UniProtKB-UniRule"/>
</dbReference>
<dbReference type="GO" id="GO:0006094">
    <property type="term" value="P:gluconeogenesis"/>
    <property type="evidence" value="ECO:0007669"/>
    <property type="project" value="TreeGrafter"/>
</dbReference>
<dbReference type="GO" id="GO:0006096">
    <property type="term" value="P:glycolytic process"/>
    <property type="evidence" value="ECO:0007669"/>
    <property type="project" value="UniProtKB-UniRule"/>
</dbReference>
<dbReference type="CDD" id="cd00318">
    <property type="entry name" value="Phosphoglycerate_kinase"/>
    <property type="match status" value="1"/>
</dbReference>
<dbReference type="FunFam" id="3.40.50.1260:FF:000006">
    <property type="entry name" value="Phosphoglycerate kinase"/>
    <property type="match status" value="1"/>
</dbReference>
<dbReference type="FunFam" id="3.40.50.1260:FF:000031">
    <property type="entry name" value="Phosphoglycerate kinase 1"/>
    <property type="match status" value="1"/>
</dbReference>
<dbReference type="Gene3D" id="3.40.50.1260">
    <property type="entry name" value="Phosphoglycerate kinase, N-terminal domain"/>
    <property type="match status" value="2"/>
</dbReference>
<dbReference type="HAMAP" id="MF_00145">
    <property type="entry name" value="Phosphoglyc_kinase"/>
    <property type="match status" value="1"/>
</dbReference>
<dbReference type="InterPro" id="IPR001576">
    <property type="entry name" value="Phosphoglycerate_kinase"/>
</dbReference>
<dbReference type="InterPro" id="IPR015911">
    <property type="entry name" value="Phosphoglycerate_kinase_CS"/>
</dbReference>
<dbReference type="InterPro" id="IPR015824">
    <property type="entry name" value="Phosphoglycerate_kinase_N"/>
</dbReference>
<dbReference type="InterPro" id="IPR036043">
    <property type="entry name" value="Phosphoglycerate_kinase_sf"/>
</dbReference>
<dbReference type="PANTHER" id="PTHR11406">
    <property type="entry name" value="PHOSPHOGLYCERATE KINASE"/>
    <property type="match status" value="1"/>
</dbReference>
<dbReference type="PANTHER" id="PTHR11406:SF23">
    <property type="entry name" value="PHOSPHOGLYCERATE KINASE 1, CHLOROPLASTIC-RELATED"/>
    <property type="match status" value="1"/>
</dbReference>
<dbReference type="Pfam" id="PF00162">
    <property type="entry name" value="PGK"/>
    <property type="match status" value="1"/>
</dbReference>
<dbReference type="PIRSF" id="PIRSF000724">
    <property type="entry name" value="Pgk"/>
    <property type="match status" value="1"/>
</dbReference>
<dbReference type="PRINTS" id="PR00477">
    <property type="entry name" value="PHGLYCKINASE"/>
</dbReference>
<dbReference type="SUPFAM" id="SSF53748">
    <property type="entry name" value="Phosphoglycerate kinase"/>
    <property type="match status" value="1"/>
</dbReference>
<dbReference type="PROSITE" id="PS00111">
    <property type="entry name" value="PGLYCERATE_KINASE"/>
    <property type="match status" value="1"/>
</dbReference>
<keyword id="KW-0067">ATP-binding</keyword>
<keyword id="KW-0963">Cytoplasm</keyword>
<keyword id="KW-0324">Glycolysis</keyword>
<keyword id="KW-0418">Kinase</keyword>
<keyword id="KW-0547">Nucleotide-binding</keyword>
<keyword id="KW-0808">Transferase</keyword>
<organism>
    <name type="scientific">Salinispora arenicola (strain CNS-205)</name>
    <dbReference type="NCBI Taxonomy" id="391037"/>
    <lineage>
        <taxon>Bacteria</taxon>
        <taxon>Bacillati</taxon>
        <taxon>Actinomycetota</taxon>
        <taxon>Actinomycetes</taxon>
        <taxon>Micromonosporales</taxon>
        <taxon>Micromonosporaceae</taxon>
        <taxon>Salinispora</taxon>
    </lineage>
</organism>
<comment type="catalytic activity">
    <reaction evidence="1">
        <text>(2R)-3-phosphoglycerate + ATP = (2R)-3-phospho-glyceroyl phosphate + ADP</text>
        <dbReference type="Rhea" id="RHEA:14801"/>
        <dbReference type="ChEBI" id="CHEBI:30616"/>
        <dbReference type="ChEBI" id="CHEBI:57604"/>
        <dbReference type="ChEBI" id="CHEBI:58272"/>
        <dbReference type="ChEBI" id="CHEBI:456216"/>
        <dbReference type="EC" id="2.7.2.3"/>
    </reaction>
</comment>
<comment type="pathway">
    <text evidence="1">Carbohydrate degradation; glycolysis; pyruvate from D-glyceraldehyde 3-phosphate: step 2/5.</text>
</comment>
<comment type="subunit">
    <text evidence="1">Monomer.</text>
</comment>
<comment type="subcellular location">
    <subcellularLocation>
        <location evidence="1">Cytoplasm</location>
    </subcellularLocation>
</comment>
<comment type="similarity">
    <text evidence="1">Belongs to the phosphoglycerate kinase family.</text>
</comment>
<feature type="chain" id="PRO_1000076602" description="Phosphoglycerate kinase">
    <location>
        <begin position="1"/>
        <end position="399"/>
    </location>
</feature>
<feature type="binding site" evidence="1">
    <location>
        <begin position="24"/>
        <end position="26"/>
    </location>
    <ligand>
        <name>substrate</name>
    </ligand>
</feature>
<feature type="binding site" evidence="1">
    <location>
        <position position="41"/>
    </location>
    <ligand>
        <name>substrate</name>
    </ligand>
</feature>
<feature type="binding site" evidence="1">
    <location>
        <begin position="64"/>
        <end position="67"/>
    </location>
    <ligand>
        <name>substrate</name>
    </ligand>
</feature>
<feature type="binding site" evidence="1">
    <location>
        <position position="123"/>
    </location>
    <ligand>
        <name>substrate</name>
    </ligand>
</feature>
<feature type="binding site" evidence="1">
    <location>
        <position position="160"/>
    </location>
    <ligand>
        <name>substrate</name>
    </ligand>
</feature>
<feature type="binding site" evidence="1">
    <location>
        <position position="210"/>
    </location>
    <ligand>
        <name>ATP</name>
        <dbReference type="ChEBI" id="CHEBI:30616"/>
    </ligand>
</feature>
<feature type="binding site" evidence="1">
    <location>
        <position position="298"/>
    </location>
    <ligand>
        <name>ATP</name>
        <dbReference type="ChEBI" id="CHEBI:30616"/>
    </ligand>
</feature>
<feature type="binding site" evidence="1">
    <location>
        <position position="329"/>
    </location>
    <ligand>
        <name>ATP</name>
        <dbReference type="ChEBI" id="CHEBI:30616"/>
    </ligand>
</feature>
<feature type="binding site" evidence="1">
    <location>
        <begin position="355"/>
        <end position="358"/>
    </location>
    <ligand>
        <name>ATP</name>
        <dbReference type="ChEBI" id="CHEBI:30616"/>
    </ligand>
</feature>
<protein>
    <recommendedName>
        <fullName evidence="1">Phosphoglycerate kinase</fullName>
        <ecNumber evidence="1">2.7.2.3</ecNumber>
    </recommendedName>
</protein>
<accession>A8LW18</accession>
<proteinExistence type="inferred from homology"/>
<gene>
    <name evidence="1" type="primary">pgk</name>
    <name type="ordered locus">Sare_3324</name>
</gene>
<name>PGK_SALAI</name>